<sequence>MGMTMTQKILASHAGLESVKAGQLIEVNLDLVLGNDITTPVAINEFKKFGVDKVFNKSQIAIVPDHFTPNKDIKAAEQVKYVREFSNKMGIENFFEVGEMGIEHCLLPEKGLVVAGDVVIGADSHTCTYGALGAFSTGIGSTDMAAGMATGQTWFKVPSAIKFILKNKPAKWVSGKDIILHIIGMIGVDGALYKSMEFVGDGLNYLSMDDRFTMANMAIEAGGKNGIFPVDDKTVEYLKEHTEKEWKIYEADEDAEYDEVIEIDLSTLKPTVSFPHLPDNTRTIDNANRVNIDQVVIGSCTNGRISDLRIARGILKGKKVKKGIRCIVIPGTQKIYLQALEEGIIKDLIEAGAVVSTPTCGPCLGGHMGILAKGERCVSTTNRNFVGRMGHVESEVYLASPAVAAASALTGKITDPELV</sequence>
<proteinExistence type="inferred from homology"/>
<gene>
    <name evidence="1" type="primary">leuC</name>
    <name type="ordered locus">CLH_0303</name>
</gene>
<comment type="function">
    <text evidence="1">Catalyzes the isomerization between 2-isopropylmalate and 3-isopropylmalate, via the formation of 2-isopropylmaleate.</text>
</comment>
<comment type="catalytic activity">
    <reaction evidence="1">
        <text>(2R,3S)-3-isopropylmalate = (2S)-2-isopropylmalate</text>
        <dbReference type="Rhea" id="RHEA:32287"/>
        <dbReference type="ChEBI" id="CHEBI:1178"/>
        <dbReference type="ChEBI" id="CHEBI:35121"/>
        <dbReference type="EC" id="4.2.1.33"/>
    </reaction>
</comment>
<comment type="cofactor">
    <cofactor evidence="1">
        <name>[4Fe-4S] cluster</name>
        <dbReference type="ChEBI" id="CHEBI:49883"/>
    </cofactor>
    <text evidence="1">Binds 1 [4Fe-4S] cluster per subunit.</text>
</comment>
<comment type="pathway">
    <text evidence="1">Amino-acid biosynthesis; L-leucine biosynthesis; L-leucine from 3-methyl-2-oxobutanoate: step 2/4.</text>
</comment>
<comment type="subunit">
    <text evidence="1">Heterodimer of LeuC and LeuD.</text>
</comment>
<comment type="similarity">
    <text evidence="1">Belongs to the aconitase/IPM isomerase family. LeuC type 2 subfamily.</text>
</comment>
<protein>
    <recommendedName>
        <fullName evidence="1">3-isopropylmalate dehydratase large subunit</fullName>
        <ecNumber evidence="1">4.2.1.33</ecNumber>
    </recommendedName>
    <alternativeName>
        <fullName evidence="1">Alpha-IPM isomerase</fullName>
        <shortName evidence="1">IPMI</shortName>
    </alternativeName>
    <alternativeName>
        <fullName evidence="1">Isopropylmalate isomerase</fullName>
    </alternativeName>
</protein>
<name>LEUC_CLOBA</name>
<evidence type="ECO:0000255" key="1">
    <source>
        <dbReference type="HAMAP-Rule" id="MF_01027"/>
    </source>
</evidence>
<dbReference type="EC" id="4.2.1.33" evidence="1"/>
<dbReference type="EMBL" id="CP001078">
    <property type="protein sequence ID" value="ACD51338.1"/>
    <property type="molecule type" value="Genomic_DNA"/>
</dbReference>
<dbReference type="RefSeq" id="WP_012449724.1">
    <property type="nucleotide sequence ID" value="NC_010723.1"/>
</dbReference>
<dbReference type="SMR" id="B2UYH6"/>
<dbReference type="KEGG" id="cbt:CLH_0303"/>
<dbReference type="HOGENOM" id="CLU_006714_3_4_9"/>
<dbReference type="UniPathway" id="UPA00048">
    <property type="reaction ID" value="UER00071"/>
</dbReference>
<dbReference type="GO" id="GO:0003861">
    <property type="term" value="F:3-isopropylmalate dehydratase activity"/>
    <property type="evidence" value="ECO:0007669"/>
    <property type="project" value="UniProtKB-UniRule"/>
</dbReference>
<dbReference type="GO" id="GO:0051539">
    <property type="term" value="F:4 iron, 4 sulfur cluster binding"/>
    <property type="evidence" value="ECO:0007669"/>
    <property type="project" value="UniProtKB-KW"/>
</dbReference>
<dbReference type="GO" id="GO:0046872">
    <property type="term" value="F:metal ion binding"/>
    <property type="evidence" value="ECO:0007669"/>
    <property type="project" value="UniProtKB-KW"/>
</dbReference>
<dbReference type="GO" id="GO:0009098">
    <property type="term" value="P:L-leucine biosynthetic process"/>
    <property type="evidence" value="ECO:0007669"/>
    <property type="project" value="UniProtKB-UniRule"/>
</dbReference>
<dbReference type="CDD" id="cd01583">
    <property type="entry name" value="IPMI"/>
    <property type="match status" value="1"/>
</dbReference>
<dbReference type="Gene3D" id="3.30.499.10">
    <property type="entry name" value="Aconitase, domain 3"/>
    <property type="match status" value="2"/>
</dbReference>
<dbReference type="HAMAP" id="MF_01027">
    <property type="entry name" value="LeuC_type2"/>
    <property type="match status" value="1"/>
</dbReference>
<dbReference type="InterPro" id="IPR015931">
    <property type="entry name" value="Acnase/IPM_dHydase_lsu_aba_1/3"/>
</dbReference>
<dbReference type="InterPro" id="IPR001030">
    <property type="entry name" value="Acoase/IPM_deHydtase_lsu_aba"/>
</dbReference>
<dbReference type="InterPro" id="IPR018136">
    <property type="entry name" value="Aconitase_4Fe-4S_BS"/>
</dbReference>
<dbReference type="InterPro" id="IPR036008">
    <property type="entry name" value="Aconitase_4Fe-4S_dom"/>
</dbReference>
<dbReference type="InterPro" id="IPR011826">
    <property type="entry name" value="HAcnase/IPMdehydase_lsu_prok"/>
</dbReference>
<dbReference type="InterPro" id="IPR006251">
    <property type="entry name" value="Homoacnase/IPMdehydase_lsu"/>
</dbReference>
<dbReference type="InterPro" id="IPR050067">
    <property type="entry name" value="IPM_dehydratase_rel_enz"/>
</dbReference>
<dbReference type="InterPro" id="IPR033941">
    <property type="entry name" value="IPMI_cat"/>
</dbReference>
<dbReference type="InterPro" id="IPR011823">
    <property type="entry name" value="IsopropMal_deHydtase_lsu_bac"/>
</dbReference>
<dbReference type="NCBIfam" id="TIGR01343">
    <property type="entry name" value="hacA_fam"/>
    <property type="match status" value="1"/>
</dbReference>
<dbReference type="NCBIfam" id="TIGR02086">
    <property type="entry name" value="IPMI_arch"/>
    <property type="match status" value="1"/>
</dbReference>
<dbReference type="NCBIfam" id="TIGR02083">
    <property type="entry name" value="LEU2"/>
    <property type="match status" value="1"/>
</dbReference>
<dbReference type="NCBIfam" id="NF001614">
    <property type="entry name" value="PRK00402.1"/>
    <property type="match status" value="1"/>
</dbReference>
<dbReference type="PANTHER" id="PTHR43822:SF16">
    <property type="entry name" value="3-ISOPROPYLMALATE DEHYDRATASE LARGE SUBUNIT 2"/>
    <property type="match status" value="1"/>
</dbReference>
<dbReference type="PANTHER" id="PTHR43822">
    <property type="entry name" value="HOMOACONITASE, MITOCHONDRIAL-RELATED"/>
    <property type="match status" value="1"/>
</dbReference>
<dbReference type="Pfam" id="PF00330">
    <property type="entry name" value="Aconitase"/>
    <property type="match status" value="1"/>
</dbReference>
<dbReference type="PRINTS" id="PR00415">
    <property type="entry name" value="ACONITASE"/>
</dbReference>
<dbReference type="SUPFAM" id="SSF53732">
    <property type="entry name" value="Aconitase iron-sulfur domain"/>
    <property type="match status" value="1"/>
</dbReference>
<dbReference type="PROSITE" id="PS00450">
    <property type="entry name" value="ACONITASE_1"/>
    <property type="match status" value="1"/>
</dbReference>
<dbReference type="PROSITE" id="PS01244">
    <property type="entry name" value="ACONITASE_2"/>
    <property type="match status" value="1"/>
</dbReference>
<organism>
    <name type="scientific">Clostridium botulinum (strain Alaska E43 / Type E3)</name>
    <dbReference type="NCBI Taxonomy" id="508767"/>
    <lineage>
        <taxon>Bacteria</taxon>
        <taxon>Bacillati</taxon>
        <taxon>Bacillota</taxon>
        <taxon>Clostridia</taxon>
        <taxon>Eubacteriales</taxon>
        <taxon>Clostridiaceae</taxon>
        <taxon>Clostridium</taxon>
    </lineage>
</organism>
<keyword id="KW-0004">4Fe-4S</keyword>
<keyword id="KW-0028">Amino-acid biosynthesis</keyword>
<keyword id="KW-0100">Branched-chain amino acid biosynthesis</keyword>
<keyword id="KW-0408">Iron</keyword>
<keyword id="KW-0411">Iron-sulfur</keyword>
<keyword id="KW-0432">Leucine biosynthesis</keyword>
<keyword id="KW-0456">Lyase</keyword>
<keyword id="KW-0479">Metal-binding</keyword>
<feature type="chain" id="PRO_1000135726" description="3-isopropylmalate dehydratase large subunit">
    <location>
        <begin position="1"/>
        <end position="419"/>
    </location>
</feature>
<feature type="binding site" evidence="1">
    <location>
        <position position="300"/>
    </location>
    <ligand>
        <name>[4Fe-4S] cluster</name>
        <dbReference type="ChEBI" id="CHEBI:49883"/>
    </ligand>
</feature>
<feature type="binding site" evidence="1">
    <location>
        <position position="360"/>
    </location>
    <ligand>
        <name>[4Fe-4S] cluster</name>
        <dbReference type="ChEBI" id="CHEBI:49883"/>
    </ligand>
</feature>
<feature type="binding site" evidence="1">
    <location>
        <position position="363"/>
    </location>
    <ligand>
        <name>[4Fe-4S] cluster</name>
        <dbReference type="ChEBI" id="CHEBI:49883"/>
    </ligand>
</feature>
<accession>B2UYH6</accession>
<reference key="1">
    <citation type="submission" date="2008-05" db="EMBL/GenBank/DDBJ databases">
        <title>Complete genome sequence of Clostridium botulinum E3 str. Alaska E43.</title>
        <authorList>
            <person name="Brinkac L.M."/>
            <person name="Brown J.L."/>
            <person name="Bruce D."/>
            <person name="Detter C."/>
            <person name="Munk C."/>
            <person name="Smith L.A."/>
            <person name="Smith T.J."/>
            <person name="Sutton G."/>
            <person name="Brettin T.S."/>
        </authorList>
    </citation>
    <scope>NUCLEOTIDE SEQUENCE [LARGE SCALE GENOMIC DNA]</scope>
    <source>
        <strain>Alaska E43 / Type E3</strain>
    </source>
</reference>